<protein>
    <recommendedName>
        <fullName>Uncharacterized protein R814</fullName>
    </recommendedName>
</protein>
<feature type="chain" id="PRO_0000253212" description="Uncharacterized protein R814">
    <location>
        <begin position="1"/>
        <end position="305"/>
    </location>
</feature>
<organism>
    <name type="scientific">Acanthamoeba polyphaga mimivirus</name>
    <name type="common">APMV</name>
    <dbReference type="NCBI Taxonomy" id="212035"/>
    <lineage>
        <taxon>Viruses</taxon>
        <taxon>Varidnaviria</taxon>
        <taxon>Bamfordvirae</taxon>
        <taxon>Nucleocytoviricota</taxon>
        <taxon>Megaviricetes</taxon>
        <taxon>Imitervirales</taxon>
        <taxon>Mimiviridae</taxon>
        <taxon>Megamimivirinae</taxon>
        <taxon>Mimivirus</taxon>
        <taxon>Mimivirus bradfordmassiliense</taxon>
    </lineage>
</organism>
<reference key="1">
    <citation type="journal article" date="2004" name="Science">
        <title>The 1.2-megabase genome sequence of Mimivirus.</title>
        <authorList>
            <person name="Raoult D."/>
            <person name="Audic S."/>
            <person name="Robert C."/>
            <person name="Abergel C."/>
            <person name="Renesto P."/>
            <person name="Ogata H."/>
            <person name="La Scola B."/>
            <person name="Susan M."/>
            <person name="Claverie J.-M."/>
        </authorList>
    </citation>
    <scope>NUCLEOTIDE SEQUENCE [LARGE SCALE GENOMIC DNA]</scope>
    <source>
        <strain>Rowbotham-Bradford</strain>
    </source>
</reference>
<dbReference type="EMBL" id="AY653733">
    <property type="protein sequence ID" value="AAV51074.1"/>
    <property type="molecule type" value="Genomic_DNA"/>
</dbReference>
<dbReference type="SMR" id="Q5UQH1"/>
<dbReference type="KEGG" id="vg:9925477"/>
<dbReference type="Proteomes" id="UP000001134">
    <property type="component" value="Genome"/>
</dbReference>
<accession>Q5UQH1</accession>
<proteinExistence type="predicted"/>
<keyword id="KW-1185">Reference proteome</keyword>
<sequence>MRQFKRAYAKSLADNSNDTNSNGVTPLQYAIKTHNDYKIRKILKKYKTWKNIMEDLQYPLDIPEFDDPTKYFTEIASNSETETFKMILELDPEITDDNIKHFMINCRGNNCMEKFDMLHKHPSVKDKIGLFNSRNNVGSYIIFHARFDIDKIKNFEKRFGKIKIDNEMINVLTGPGYYWGGGSCQKNFEIIQDLENNFEVDYSRLNIGECECSNVLDFIINRRDISEIIDQDNSRNPTDRIIFKKKYDLLWEEKHRYTGSKKRIKEREKCIDILLDKGFADAKTSSVIRYYNNLHNGYQYGPYMD</sequence>
<gene>
    <name type="ordered locus">MIMI_R814</name>
</gene>
<name>YR814_MIMIV</name>
<organismHost>
    <name type="scientific">Acanthamoeba polyphaga</name>
    <name type="common">Amoeba</name>
    <dbReference type="NCBI Taxonomy" id="5757"/>
</organismHost>